<name>SSB_CORGL</name>
<accession>Q8NLG0</accession>
<keyword id="KW-0238">DNA-binding</keyword>
<keyword id="KW-1185">Reference proteome</keyword>
<evidence type="ECO:0000255" key="1">
    <source>
        <dbReference type="HAMAP-Rule" id="MF_00984"/>
    </source>
</evidence>
<evidence type="ECO:0000256" key="2">
    <source>
        <dbReference type="SAM" id="MobiDB-lite"/>
    </source>
</evidence>
<reference key="1">
    <citation type="journal article" date="2003" name="Appl. Microbiol. Biotechnol.">
        <title>The Corynebacterium glutamicum genome: features and impacts on biotechnological processes.</title>
        <authorList>
            <person name="Ikeda M."/>
            <person name="Nakagawa S."/>
        </authorList>
    </citation>
    <scope>NUCLEOTIDE SEQUENCE [LARGE SCALE GENOMIC DNA]</scope>
    <source>
        <strain>ATCC 13032 / DSM 20300 / JCM 1318 / BCRC 11384 / CCUG 27702 / LMG 3730 / NBRC 12168 / NCIMB 10025 / NRRL B-2784 / 534</strain>
    </source>
</reference>
<reference key="2">
    <citation type="journal article" date="2003" name="J. Biotechnol.">
        <title>The complete Corynebacterium glutamicum ATCC 13032 genome sequence and its impact on the production of L-aspartate-derived amino acids and vitamins.</title>
        <authorList>
            <person name="Kalinowski J."/>
            <person name="Bathe B."/>
            <person name="Bartels D."/>
            <person name="Bischoff N."/>
            <person name="Bott M."/>
            <person name="Burkovski A."/>
            <person name="Dusch N."/>
            <person name="Eggeling L."/>
            <person name="Eikmanns B.J."/>
            <person name="Gaigalat L."/>
            <person name="Goesmann A."/>
            <person name="Hartmann M."/>
            <person name="Huthmacher K."/>
            <person name="Kraemer R."/>
            <person name="Linke B."/>
            <person name="McHardy A.C."/>
            <person name="Meyer F."/>
            <person name="Moeckel B."/>
            <person name="Pfefferle W."/>
            <person name="Puehler A."/>
            <person name="Rey D.A."/>
            <person name="Rueckert C."/>
            <person name="Rupp O."/>
            <person name="Sahm H."/>
            <person name="Wendisch V.F."/>
            <person name="Wiegraebe I."/>
            <person name="Tauch A."/>
        </authorList>
    </citation>
    <scope>NUCLEOTIDE SEQUENCE [LARGE SCALE GENOMIC DNA]</scope>
    <source>
        <strain>ATCC 13032 / DSM 20300 / JCM 1318 / BCRC 11384 / CCUG 27702 / LMG 3730 / NBRC 12168 / NCIMB 10025 / NRRL B-2784 / 534</strain>
    </source>
</reference>
<comment type="subunit">
    <text evidence="1">Homotetramer.</text>
</comment>
<dbReference type="EMBL" id="BA000036">
    <property type="protein sequence ID" value="BAC00376.1"/>
    <property type="molecule type" value="Genomic_DNA"/>
</dbReference>
<dbReference type="EMBL" id="BX927157">
    <property type="protein sequence ID" value="CAF18921.1"/>
    <property type="molecule type" value="Genomic_DNA"/>
</dbReference>
<dbReference type="RefSeq" id="NP_602177.1">
    <property type="nucleotide sequence ID" value="NC_003450.3"/>
</dbReference>
<dbReference type="RefSeq" id="WP_011015545.1">
    <property type="nucleotide sequence ID" value="NC_006958.1"/>
</dbReference>
<dbReference type="SMR" id="Q8NLG0"/>
<dbReference type="STRING" id="196627.cg3307"/>
<dbReference type="KEGG" id="cgb:cg3307"/>
<dbReference type="KEGG" id="cgl:Cgl2982"/>
<dbReference type="PATRIC" id="fig|196627.13.peg.2915"/>
<dbReference type="eggNOG" id="COG0629">
    <property type="taxonomic scope" value="Bacteria"/>
</dbReference>
<dbReference type="HOGENOM" id="CLU_078758_1_0_11"/>
<dbReference type="OrthoDB" id="9809878at2"/>
<dbReference type="BioCyc" id="CORYNE:G18NG-12603-MONOMER"/>
<dbReference type="Proteomes" id="UP000000582">
    <property type="component" value="Chromosome"/>
</dbReference>
<dbReference type="Proteomes" id="UP000001009">
    <property type="component" value="Chromosome"/>
</dbReference>
<dbReference type="GO" id="GO:0009295">
    <property type="term" value="C:nucleoid"/>
    <property type="evidence" value="ECO:0007669"/>
    <property type="project" value="TreeGrafter"/>
</dbReference>
<dbReference type="GO" id="GO:0003697">
    <property type="term" value="F:single-stranded DNA binding"/>
    <property type="evidence" value="ECO:0007669"/>
    <property type="project" value="UniProtKB-UniRule"/>
</dbReference>
<dbReference type="GO" id="GO:0006260">
    <property type="term" value="P:DNA replication"/>
    <property type="evidence" value="ECO:0007669"/>
    <property type="project" value="InterPro"/>
</dbReference>
<dbReference type="CDD" id="cd04496">
    <property type="entry name" value="SSB_OBF"/>
    <property type="match status" value="1"/>
</dbReference>
<dbReference type="Gene3D" id="2.40.50.140">
    <property type="entry name" value="Nucleic acid-binding proteins"/>
    <property type="match status" value="1"/>
</dbReference>
<dbReference type="HAMAP" id="MF_00984">
    <property type="entry name" value="SSB"/>
    <property type="match status" value="1"/>
</dbReference>
<dbReference type="InterPro" id="IPR012340">
    <property type="entry name" value="NA-bd_OB-fold"/>
</dbReference>
<dbReference type="InterPro" id="IPR000424">
    <property type="entry name" value="Primosome_PriB/ssb"/>
</dbReference>
<dbReference type="InterPro" id="IPR011344">
    <property type="entry name" value="ssDNA-bd"/>
</dbReference>
<dbReference type="NCBIfam" id="NF005851">
    <property type="entry name" value="PRK07772.1"/>
    <property type="match status" value="1"/>
</dbReference>
<dbReference type="NCBIfam" id="TIGR00621">
    <property type="entry name" value="ssb"/>
    <property type="match status" value="1"/>
</dbReference>
<dbReference type="PANTHER" id="PTHR10302">
    <property type="entry name" value="SINGLE-STRANDED DNA-BINDING PROTEIN"/>
    <property type="match status" value="1"/>
</dbReference>
<dbReference type="PANTHER" id="PTHR10302:SF27">
    <property type="entry name" value="SINGLE-STRANDED DNA-BINDING PROTEIN"/>
    <property type="match status" value="1"/>
</dbReference>
<dbReference type="Pfam" id="PF00436">
    <property type="entry name" value="SSB"/>
    <property type="match status" value="1"/>
</dbReference>
<dbReference type="SUPFAM" id="SSF50249">
    <property type="entry name" value="Nucleic acid-binding proteins"/>
    <property type="match status" value="1"/>
</dbReference>
<dbReference type="PROSITE" id="PS50935">
    <property type="entry name" value="SSB"/>
    <property type="match status" value="1"/>
</dbReference>
<sequence length="225" mass="23301">MAIGDTNITVVGNIVADPELRFTPSGAAVANFRIASTPRSFNRQTNQWEDGEALFLTVNVWRQAAENVAESLSKGMRVIVTGRLKQRSYETREGEKRSVFEVEADEVGPSLTFAKADVQRTPRGGNSGGNYGGGNQGGGLGGNQGNQQGGFSNQNSGGFGGNQGNQQQSNQGGFGGNQNQSQGNNFNQGGFGGGSPQAAPDNDPWNSAPPAGSGGFGGADDEPPF</sequence>
<proteinExistence type="inferred from homology"/>
<gene>
    <name type="primary">ssb</name>
    <name type="ordered locus">Cgl2982</name>
    <name type="ordered locus">cg3307</name>
</gene>
<feature type="chain" id="PRO_0000096034" description="Single-stranded DNA-binding protein">
    <location>
        <begin position="1"/>
        <end position="225"/>
    </location>
</feature>
<feature type="domain" description="SSB" evidence="1">
    <location>
        <begin position="3"/>
        <end position="111"/>
    </location>
</feature>
<feature type="region of interest" description="Disordered" evidence="2">
    <location>
        <begin position="111"/>
        <end position="225"/>
    </location>
</feature>
<feature type="compositionally biased region" description="Gly residues" evidence="2">
    <location>
        <begin position="125"/>
        <end position="148"/>
    </location>
</feature>
<feature type="compositionally biased region" description="Low complexity" evidence="2">
    <location>
        <begin position="164"/>
        <end position="188"/>
    </location>
</feature>
<protein>
    <recommendedName>
        <fullName evidence="1">Single-stranded DNA-binding protein</fullName>
        <shortName evidence="1">SSB</shortName>
    </recommendedName>
</protein>
<organism>
    <name type="scientific">Corynebacterium glutamicum (strain ATCC 13032 / DSM 20300 / JCM 1318 / BCRC 11384 / CCUG 27702 / LMG 3730 / NBRC 12168 / NCIMB 10025 / NRRL B-2784 / 534)</name>
    <dbReference type="NCBI Taxonomy" id="196627"/>
    <lineage>
        <taxon>Bacteria</taxon>
        <taxon>Bacillati</taxon>
        <taxon>Actinomycetota</taxon>
        <taxon>Actinomycetes</taxon>
        <taxon>Mycobacteriales</taxon>
        <taxon>Corynebacteriaceae</taxon>
        <taxon>Corynebacterium</taxon>
    </lineage>
</organism>